<reference key="1">
    <citation type="submission" date="1999-03" db="EMBL/GenBank/DDBJ databases">
        <title>Characterization of mouse and Caenorhabditis elegans genes related to the Drosophila melanogaster ovo/svb gene.</title>
        <authorList>
            <person name="Schonbaum C.P."/>
            <person name="Fantes J."/>
            <person name="Mahowald A.P."/>
        </authorList>
    </citation>
    <scope>NUCLEOTIDE SEQUENCE [MRNA]</scope>
    <source>
        <tissue>Skin</tissue>
    </source>
</reference>
<reference key="2">
    <citation type="journal article" date="2005" name="Science">
        <title>The transcriptional landscape of the mammalian genome.</title>
        <authorList>
            <person name="Carninci P."/>
            <person name="Kasukawa T."/>
            <person name="Katayama S."/>
            <person name="Gough J."/>
            <person name="Frith M.C."/>
            <person name="Maeda N."/>
            <person name="Oyama R."/>
            <person name="Ravasi T."/>
            <person name="Lenhard B."/>
            <person name="Wells C."/>
            <person name="Kodzius R."/>
            <person name="Shimokawa K."/>
            <person name="Bajic V.B."/>
            <person name="Brenner S.E."/>
            <person name="Batalov S."/>
            <person name="Forrest A.R."/>
            <person name="Zavolan M."/>
            <person name="Davis M.J."/>
            <person name="Wilming L.G."/>
            <person name="Aidinis V."/>
            <person name="Allen J.E."/>
            <person name="Ambesi-Impiombato A."/>
            <person name="Apweiler R."/>
            <person name="Aturaliya R.N."/>
            <person name="Bailey T.L."/>
            <person name="Bansal M."/>
            <person name="Baxter L."/>
            <person name="Beisel K.W."/>
            <person name="Bersano T."/>
            <person name="Bono H."/>
            <person name="Chalk A.M."/>
            <person name="Chiu K.P."/>
            <person name="Choudhary V."/>
            <person name="Christoffels A."/>
            <person name="Clutterbuck D.R."/>
            <person name="Crowe M.L."/>
            <person name="Dalla E."/>
            <person name="Dalrymple B.P."/>
            <person name="de Bono B."/>
            <person name="Della Gatta G."/>
            <person name="di Bernardo D."/>
            <person name="Down T."/>
            <person name="Engstrom P."/>
            <person name="Fagiolini M."/>
            <person name="Faulkner G."/>
            <person name="Fletcher C.F."/>
            <person name="Fukushima T."/>
            <person name="Furuno M."/>
            <person name="Futaki S."/>
            <person name="Gariboldi M."/>
            <person name="Georgii-Hemming P."/>
            <person name="Gingeras T.R."/>
            <person name="Gojobori T."/>
            <person name="Green R.E."/>
            <person name="Gustincich S."/>
            <person name="Harbers M."/>
            <person name="Hayashi Y."/>
            <person name="Hensch T.K."/>
            <person name="Hirokawa N."/>
            <person name="Hill D."/>
            <person name="Huminiecki L."/>
            <person name="Iacono M."/>
            <person name="Ikeo K."/>
            <person name="Iwama A."/>
            <person name="Ishikawa T."/>
            <person name="Jakt M."/>
            <person name="Kanapin A."/>
            <person name="Katoh M."/>
            <person name="Kawasawa Y."/>
            <person name="Kelso J."/>
            <person name="Kitamura H."/>
            <person name="Kitano H."/>
            <person name="Kollias G."/>
            <person name="Krishnan S.P."/>
            <person name="Kruger A."/>
            <person name="Kummerfeld S.K."/>
            <person name="Kurochkin I.V."/>
            <person name="Lareau L.F."/>
            <person name="Lazarevic D."/>
            <person name="Lipovich L."/>
            <person name="Liu J."/>
            <person name="Liuni S."/>
            <person name="McWilliam S."/>
            <person name="Madan Babu M."/>
            <person name="Madera M."/>
            <person name="Marchionni L."/>
            <person name="Matsuda H."/>
            <person name="Matsuzawa S."/>
            <person name="Miki H."/>
            <person name="Mignone F."/>
            <person name="Miyake S."/>
            <person name="Morris K."/>
            <person name="Mottagui-Tabar S."/>
            <person name="Mulder N."/>
            <person name="Nakano N."/>
            <person name="Nakauchi H."/>
            <person name="Ng P."/>
            <person name="Nilsson R."/>
            <person name="Nishiguchi S."/>
            <person name="Nishikawa S."/>
            <person name="Nori F."/>
            <person name="Ohara O."/>
            <person name="Okazaki Y."/>
            <person name="Orlando V."/>
            <person name="Pang K.C."/>
            <person name="Pavan W.J."/>
            <person name="Pavesi G."/>
            <person name="Pesole G."/>
            <person name="Petrovsky N."/>
            <person name="Piazza S."/>
            <person name="Reed J."/>
            <person name="Reid J.F."/>
            <person name="Ring B.Z."/>
            <person name="Ringwald M."/>
            <person name="Rost B."/>
            <person name="Ruan Y."/>
            <person name="Salzberg S.L."/>
            <person name="Sandelin A."/>
            <person name="Schneider C."/>
            <person name="Schoenbach C."/>
            <person name="Sekiguchi K."/>
            <person name="Semple C.A."/>
            <person name="Seno S."/>
            <person name="Sessa L."/>
            <person name="Sheng Y."/>
            <person name="Shibata Y."/>
            <person name="Shimada H."/>
            <person name="Shimada K."/>
            <person name="Silva D."/>
            <person name="Sinclair B."/>
            <person name="Sperling S."/>
            <person name="Stupka E."/>
            <person name="Sugiura K."/>
            <person name="Sultana R."/>
            <person name="Takenaka Y."/>
            <person name="Taki K."/>
            <person name="Tammoja K."/>
            <person name="Tan S.L."/>
            <person name="Tang S."/>
            <person name="Taylor M.S."/>
            <person name="Tegner J."/>
            <person name="Teichmann S.A."/>
            <person name="Ueda H.R."/>
            <person name="van Nimwegen E."/>
            <person name="Verardo R."/>
            <person name="Wei C.L."/>
            <person name="Yagi K."/>
            <person name="Yamanishi H."/>
            <person name="Zabarovsky E."/>
            <person name="Zhu S."/>
            <person name="Zimmer A."/>
            <person name="Hide W."/>
            <person name="Bult C."/>
            <person name="Grimmond S.M."/>
            <person name="Teasdale R.D."/>
            <person name="Liu E.T."/>
            <person name="Brusic V."/>
            <person name="Quackenbush J."/>
            <person name="Wahlestedt C."/>
            <person name="Mattick J.S."/>
            <person name="Hume D.A."/>
            <person name="Kai C."/>
            <person name="Sasaki D."/>
            <person name="Tomaru Y."/>
            <person name="Fukuda S."/>
            <person name="Kanamori-Katayama M."/>
            <person name="Suzuki M."/>
            <person name="Aoki J."/>
            <person name="Arakawa T."/>
            <person name="Iida J."/>
            <person name="Imamura K."/>
            <person name="Itoh M."/>
            <person name="Kato T."/>
            <person name="Kawaji H."/>
            <person name="Kawagashira N."/>
            <person name="Kawashima T."/>
            <person name="Kojima M."/>
            <person name="Kondo S."/>
            <person name="Konno H."/>
            <person name="Nakano K."/>
            <person name="Ninomiya N."/>
            <person name="Nishio T."/>
            <person name="Okada M."/>
            <person name="Plessy C."/>
            <person name="Shibata K."/>
            <person name="Shiraki T."/>
            <person name="Suzuki S."/>
            <person name="Tagami M."/>
            <person name="Waki K."/>
            <person name="Watahiki A."/>
            <person name="Okamura-Oho Y."/>
            <person name="Suzuki H."/>
            <person name="Kawai J."/>
            <person name="Hayashizaki Y."/>
        </authorList>
    </citation>
    <scope>NUCLEOTIDE SEQUENCE [LARGE SCALE MRNA]</scope>
    <source>
        <strain>C57BL/6J</strain>
        <tissue>Skin</tissue>
    </source>
</reference>
<reference key="3">
    <citation type="journal article" date="2004" name="Genome Res.">
        <title>The status, quality, and expansion of the NIH full-length cDNA project: the Mammalian Gene Collection (MGC).</title>
        <authorList>
            <consortium name="The MGC Project Team"/>
        </authorList>
    </citation>
    <scope>NUCLEOTIDE SEQUENCE [LARGE SCALE MRNA]</scope>
    <source>
        <strain>FVB/N-3</strain>
        <tissue>Mammary gland</tissue>
    </source>
</reference>
<reference key="4">
    <citation type="journal article" date="1998" name="Genes Dev.">
        <title>The ovo gene required for cuticle formation and oogenesis in flies is involved in hair formation and spermatogenesis in mice.</title>
        <authorList>
            <person name="Dai X."/>
            <person name="Schonbaum C."/>
            <person name="Degenstein L."/>
            <person name="Bai W."/>
            <person name="Mahowald A."/>
            <person name="Fuchs E."/>
        </authorList>
    </citation>
    <scope>FUNCTION</scope>
</reference>
<proteinExistence type="evidence at transcript level"/>
<name>OVOL1_MOUSE</name>
<feature type="chain" id="PRO_0000047012" description="Putative transcription factor Ovo-like 1">
    <location>
        <begin position="1"/>
        <end position="267"/>
    </location>
</feature>
<feature type="zinc finger region" description="C2H2-type 1" evidence="1">
    <location>
        <begin position="118"/>
        <end position="140"/>
    </location>
</feature>
<feature type="zinc finger region" description="C2H2-type 2" evidence="1">
    <location>
        <begin position="146"/>
        <end position="168"/>
    </location>
</feature>
<feature type="zinc finger region" description="C2H2-type 3" evidence="1">
    <location>
        <begin position="174"/>
        <end position="197"/>
    </location>
</feature>
<feature type="zinc finger region" description="C2H2-type 4" evidence="1">
    <location>
        <begin position="213"/>
        <end position="236"/>
    </location>
</feature>
<comment type="function">
    <text evidence="2">Putative transcription factor. Involved in hair formation and spermatogenesis. May function in the differentiation and/or maintenance of the urogenital system.</text>
</comment>
<comment type="subcellular location">
    <subcellularLocation>
        <location>Nucleus</location>
    </subcellularLocation>
</comment>
<comment type="tissue specificity">
    <text>Expressed in skin, testis, kidney and weakly in lung. Not detected in heart, brain, spleen, liver and skeletal muscle.</text>
</comment>
<comment type="developmental stage">
    <text>First expressed at 14.5 dpc in the suprabasal layers of developing epidermis, at 15.5 dpc expression begins in the inner cells of developing hair germs and restricted to inner root sheath and/or precortical cells of developing hair follicles.</text>
</comment>
<gene>
    <name type="primary">Ovol1</name>
</gene>
<keyword id="KW-0238">DNA-binding</keyword>
<keyword id="KW-0479">Metal-binding</keyword>
<keyword id="KW-0539">Nucleus</keyword>
<keyword id="KW-1185">Reference proteome</keyword>
<keyword id="KW-0677">Repeat</keyword>
<keyword id="KW-0804">Transcription</keyword>
<keyword id="KW-0805">Transcription regulation</keyword>
<keyword id="KW-0862">Zinc</keyword>
<keyword id="KW-0863">Zinc-finger</keyword>
<sequence length="267" mass="30222">MPRAFLVKKPCVSTCKRNWSELPDEERGEIYVPVSLGFCPPQPYREPEASVAEPPSCPLALDMSLRDSSYSVAPGPCVVAQLPSEDVSHLTDPQSRDQGFLRTKMKVTLGDSPNGDLFTCHICQKSFTHQRMLNRHMKCHNDVKRHLCTYCGKGFNDTFDLKRHVRTHTGVRPYKCSLCDKAFTQRCSLESHLKKIHGVQQKYAYKERRAKLYVCEECGCTSESQEGHVLHLKERHPDSPLLRKTSKKVAVALQNTVTSLLQGSPHL</sequence>
<protein>
    <recommendedName>
        <fullName>Putative transcription factor Ovo-like 1</fullName>
        <shortName>mOvo1</shortName>
        <shortName>mOvo1a</shortName>
    </recommendedName>
</protein>
<organism>
    <name type="scientific">Mus musculus</name>
    <name type="common">Mouse</name>
    <dbReference type="NCBI Taxonomy" id="10090"/>
    <lineage>
        <taxon>Eukaryota</taxon>
        <taxon>Metazoa</taxon>
        <taxon>Chordata</taxon>
        <taxon>Craniata</taxon>
        <taxon>Vertebrata</taxon>
        <taxon>Euteleostomi</taxon>
        <taxon>Mammalia</taxon>
        <taxon>Eutheria</taxon>
        <taxon>Euarchontoglires</taxon>
        <taxon>Glires</taxon>
        <taxon>Rodentia</taxon>
        <taxon>Myomorpha</taxon>
        <taxon>Muroidea</taxon>
        <taxon>Muridae</taxon>
        <taxon>Murinae</taxon>
        <taxon>Mus</taxon>
        <taxon>Mus</taxon>
    </lineage>
</organism>
<evidence type="ECO:0000255" key="1">
    <source>
        <dbReference type="PROSITE-ProRule" id="PRU00042"/>
    </source>
</evidence>
<evidence type="ECO:0000269" key="2">
    <source>
    </source>
</evidence>
<dbReference type="EMBL" id="AF134804">
    <property type="protein sequence ID" value="AAD29689.1"/>
    <property type="molecule type" value="mRNA"/>
</dbReference>
<dbReference type="EMBL" id="AF134805">
    <property type="protein sequence ID" value="AAD29690.1"/>
    <property type="molecule type" value="mRNA"/>
</dbReference>
<dbReference type="EMBL" id="AK003801">
    <property type="protein sequence ID" value="BAB23003.1"/>
    <property type="molecule type" value="mRNA"/>
</dbReference>
<dbReference type="EMBL" id="AK028577">
    <property type="protein sequence ID" value="BAC26015.1"/>
    <property type="molecule type" value="mRNA"/>
</dbReference>
<dbReference type="EMBL" id="AK132478">
    <property type="protein sequence ID" value="BAE21188.1"/>
    <property type="molecule type" value="mRNA"/>
</dbReference>
<dbReference type="EMBL" id="AK132505">
    <property type="protein sequence ID" value="BAE21208.1"/>
    <property type="molecule type" value="mRNA"/>
</dbReference>
<dbReference type="EMBL" id="AK132506">
    <property type="protein sequence ID" value="BAE21209.1"/>
    <property type="molecule type" value="mRNA"/>
</dbReference>
<dbReference type="EMBL" id="BC021411">
    <property type="protein sequence ID" value="AAH21411.1"/>
    <property type="molecule type" value="mRNA"/>
</dbReference>
<dbReference type="CCDS" id="CCDS29469.1"/>
<dbReference type="RefSeq" id="NP_064319.1">
    <property type="nucleotide sequence ID" value="NM_019935.3"/>
</dbReference>
<dbReference type="SMR" id="Q9WTJ2"/>
<dbReference type="FunCoup" id="Q9WTJ2">
    <property type="interactions" value="1113"/>
</dbReference>
<dbReference type="STRING" id="10090.ENSMUSP00000025861"/>
<dbReference type="iPTMnet" id="Q9WTJ2"/>
<dbReference type="PhosphoSitePlus" id="Q9WTJ2"/>
<dbReference type="PaxDb" id="10090-ENSMUSP00000025861"/>
<dbReference type="ProteomicsDB" id="295491"/>
<dbReference type="Antibodypedia" id="1312">
    <property type="antibodies" value="233 antibodies from 28 providers"/>
</dbReference>
<dbReference type="DNASU" id="18426"/>
<dbReference type="Ensembl" id="ENSMUST00000025861.3">
    <property type="protein sequence ID" value="ENSMUSP00000025861.2"/>
    <property type="gene ID" value="ENSMUSG00000024922.3"/>
</dbReference>
<dbReference type="GeneID" id="18426"/>
<dbReference type="KEGG" id="mmu:18426"/>
<dbReference type="UCSC" id="uc008gdu.1">
    <property type="organism name" value="mouse"/>
</dbReference>
<dbReference type="AGR" id="MGI:1330290"/>
<dbReference type="CTD" id="5017"/>
<dbReference type="MGI" id="MGI:1330290">
    <property type="gene designation" value="Ovol1"/>
</dbReference>
<dbReference type="VEuPathDB" id="HostDB:ENSMUSG00000024922"/>
<dbReference type="eggNOG" id="KOG3576">
    <property type="taxonomic scope" value="Eukaryota"/>
</dbReference>
<dbReference type="GeneTree" id="ENSGT00940000161363"/>
<dbReference type="HOGENOM" id="CLU_087964_0_0_1"/>
<dbReference type="InParanoid" id="Q9WTJ2"/>
<dbReference type="OMA" id="ECGCTSD"/>
<dbReference type="OrthoDB" id="6508643at2759"/>
<dbReference type="PhylomeDB" id="Q9WTJ2"/>
<dbReference type="TreeFam" id="TF337552"/>
<dbReference type="BioGRID-ORCS" id="18426">
    <property type="hits" value="4 hits in 80 CRISPR screens"/>
</dbReference>
<dbReference type="PRO" id="PR:Q9WTJ2"/>
<dbReference type="Proteomes" id="UP000000589">
    <property type="component" value="Chromosome 19"/>
</dbReference>
<dbReference type="RNAct" id="Q9WTJ2">
    <property type="molecule type" value="protein"/>
</dbReference>
<dbReference type="Bgee" id="ENSMUSG00000024922">
    <property type="expression patterns" value="Expressed in lip and 95 other cell types or tissues"/>
</dbReference>
<dbReference type="ExpressionAtlas" id="Q9WTJ2">
    <property type="expression patterns" value="baseline and differential"/>
</dbReference>
<dbReference type="GO" id="GO:0005634">
    <property type="term" value="C:nucleus"/>
    <property type="evidence" value="ECO:0000314"/>
    <property type="project" value="MGI"/>
</dbReference>
<dbReference type="GO" id="GO:0003700">
    <property type="term" value="F:DNA-binding transcription factor activity"/>
    <property type="evidence" value="ECO:0000304"/>
    <property type="project" value="MGI"/>
</dbReference>
<dbReference type="GO" id="GO:0001227">
    <property type="term" value="F:DNA-binding transcription repressor activity, RNA polymerase II-specific"/>
    <property type="evidence" value="ECO:0000314"/>
    <property type="project" value="NTNU_SB"/>
</dbReference>
<dbReference type="GO" id="GO:0000978">
    <property type="term" value="F:RNA polymerase II cis-regulatory region sequence-specific DNA binding"/>
    <property type="evidence" value="ECO:0000314"/>
    <property type="project" value="NTNU_SB"/>
</dbReference>
<dbReference type="GO" id="GO:0008270">
    <property type="term" value="F:zinc ion binding"/>
    <property type="evidence" value="ECO:0007669"/>
    <property type="project" value="UniProtKB-KW"/>
</dbReference>
<dbReference type="GO" id="GO:0008544">
    <property type="term" value="P:epidermis development"/>
    <property type="evidence" value="ECO:0000315"/>
    <property type="project" value="MGI"/>
</dbReference>
<dbReference type="GO" id="GO:0051729">
    <property type="term" value="P:germline cell cycle switching, mitotic to meiotic cell cycle"/>
    <property type="evidence" value="ECO:0000315"/>
    <property type="project" value="MGI"/>
</dbReference>
<dbReference type="GO" id="GO:0043616">
    <property type="term" value="P:keratinocyte proliferation"/>
    <property type="evidence" value="ECO:0000316"/>
    <property type="project" value="MGI"/>
</dbReference>
<dbReference type="GO" id="GO:0001822">
    <property type="term" value="P:kidney development"/>
    <property type="evidence" value="ECO:0000315"/>
    <property type="project" value="MGI"/>
</dbReference>
<dbReference type="GO" id="GO:0044771">
    <property type="term" value="P:meiotic cell cycle phase transition"/>
    <property type="evidence" value="ECO:0000315"/>
    <property type="project" value="MGI"/>
</dbReference>
<dbReference type="GO" id="GO:0007498">
    <property type="term" value="P:mesoderm development"/>
    <property type="evidence" value="ECO:0000315"/>
    <property type="project" value="MGI"/>
</dbReference>
<dbReference type="GO" id="GO:0010839">
    <property type="term" value="P:negative regulation of keratinocyte proliferation"/>
    <property type="evidence" value="ECO:0000316"/>
    <property type="project" value="MGI"/>
</dbReference>
<dbReference type="GO" id="GO:1901994">
    <property type="term" value="P:negative regulation of meiotic cell cycle phase transition"/>
    <property type="evidence" value="ECO:0000315"/>
    <property type="project" value="MGI"/>
</dbReference>
<dbReference type="GO" id="GO:2000647">
    <property type="term" value="P:negative regulation of stem cell proliferation"/>
    <property type="evidence" value="ECO:0000316"/>
    <property type="project" value="MGI"/>
</dbReference>
<dbReference type="GO" id="GO:0000122">
    <property type="term" value="P:negative regulation of transcription by RNA polymerase II"/>
    <property type="evidence" value="ECO:0000314"/>
    <property type="project" value="MGI"/>
</dbReference>
<dbReference type="GO" id="GO:0043588">
    <property type="term" value="P:skin development"/>
    <property type="evidence" value="ECO:0000315"/>
    <property type="project" value="MGI"/>
</dbReference>
<dbReference type="GO" id="GO:0007283">
    <property type="term" value="P:spermatogenesis"/>
    <property type="evidence" value="ECO:0000315"/>
    <property type="project" value="MGI"/>
</dbReference>
<dbReference type="GO" id="GO:0072089">
    <property type="term" value="P:stem cell proliferation"/>
    <property type="evidence" value="ECO:0000316"/>
    <property type="project" value="MGI"/>
</dbReference>
<dbReference type="FunFam" id="3.30.160.60:FF:001921">
    <property type="entry name" value="Putative transcription factor Ovo-like 1"/>
    <property type="match status" value="1"/>
</dbReference>
<dbReference type="FunFam" id="3.30.160.60:FF:001221">
    <property type="entry name" value="putative transcription factor Ovo-like 1"/>
    <property type="match status" value="1"/>
</dbReference>
<dbReference type="FunFam" id="3.30.160.60:FF:001250">
    <property type="entry name" value="putative transcription factor ovo-like protein 3"/>
    <property type="match status" value="1"/>
</dbReference>
<dbReference type="Gene3D" id="3.30.160.60">
    <property type="entry name" value="Classic Zinc Finger"/>
    <property type="match status" value="3"/>
</dbReference>
<dbReference type="InterPro" id="IPR027756">
    <property type="entry name" value="Ovo-like"/>
</dbReference>
<dbReference type="InterPro" id="IPR036236">
    <property type="entry name" value="Znf_C2H2_sf"/>
</dbReference>
<dbReference type="InterPro" id="IPR013087">
    <property type="entry name" value="Znf_C2H2_type"/>
</dbReference>
<dbReference type="PANTHER" id="PTHR10032:SF217">
    <property type="entry name" value="TRANSCRIPTION FACTOR OVO-LIKE 1-RELATED"/>
    <property type="match status" value="1"/>
</dbReference>
<dbReference type="PANTHER" id="PTHR10032">
    <property type="entry name" value="ZINC FINGER PROTEIN WITH KRAB AND SCAN DOMAINS"/>
    <property type="match status" value="1"/>
</dbReference>
<dbReference type="Pfam" id="PF00096">
    <property type="entry name" value="zf-C2H2"/>
    <property type="match status" value="1"/>
</dbReference>
<dbReference type="Pfam" id="PF13465">
    <property type="entry name" value="zf-H2C2_2"/>
    <property type="match status" value="1"/>
</dbReference>
<dbReference type="SMART" id="SM00355">
    <property type="entry name" value="ZnF_C2H2"/>
    <property type="match status" value="4"/>
</dbReference>
<dbReference type="SUPFAM" id="SSF57667">
    <property type="entry name" value="beta-beta-alpha zinc fingers"/>
    <property type="match status" value="2"/>
</dbReference>
<dbReference type="PROSITE" id="PS00028">
    <property type="entry name" value="ZINC_FINGER_C2H2_1"/>
    <property type="match status" value="3"/>
</dbReference>
<dbReference type="PROSITE" id="PS50157">
    <property type="entry name" value="ZINC_FINGER_C2H2_2"/>
    <property type="match status" value="3"/>
</dbReference>
<accession>Q9WTJ2</accession>
<accession>Q545S2</accession>